<proteinExistence type="predicted"/>
<reference key="1">
    <citation type="journal article" date="2004" name="Science">
        <title>The 1.2-megabase genome sequence of Mimivirus.</title>
        <authorList>
            <person name="Raoult D."/>
            <person name="Audic S."/>
            <person name="Robert C."/>
            <person name="Abergel C."/>
            <person name="Renesto P."/>
            <person name="Ogata H."/>
            <person name="La Scola B."/>
            <person name="Susan M."/>
            <person name="Claverie J.-M."/>
        </authorList>
    </citation>
    <scope>NUCLEOTIDE SEQUENCE [LARGE SCALE GENOMIC DNA]</scope>
    <source>
        <strain>Rowbotham-Bradford</strain>
    </source>
</reference>
<name>YR466_MIMIV</name>
<organismHost>
    <name type="scientific">Acanthamoeba polyphaga</name>
    <name type="common">Amoeba</name>
    <dbReference type="NCBI Taxonomy" id="5757"/>
</organismHost>
<feature type="chain" id="PRO_0000253453" description="Uncharacterized protein R466">
    <location>
        <begin position="1"/>
        <end position="395"/>
    </location>
</feature>
<feature type="coiled-coil region" evidence="1">
    <location>
        <begin position="182"/>
        <end position="238"/>
    </location>
</feature>
<dbReference type="EMBL" id="AY653733">
    <property type="protein sequence ID" value="AAV50732.1"/>
    <property type="molecule type" value="Genomic_DNA"/>
</dbReference>
<dbReference type="SMR" id="Q5UQD5"/>
<dbReference type="KEGG" id="vg:9925091"/>
<dbReference type="OrthoDB" id="11260at10239"/>
<dbReference type="Proteomes" id="UP000001134">
    <property type="component" value="Genome"/>
</dbReference>
<keyword id="KW-0175">Coiled coil</keyword>
<keyword id="KW-1185">Reference proteome</keyword>
<gene>
    <name type="ordered locus">MIMI_R466</name>
</gene>
<evidence type="ECO:0000255" key="1"/>
<organism>
    <name type="scientific">Acanthamoeba polyphaga mimivirus</name>
    <name type="common">APMV</name>
    <dbReference type="NCBI Taxonomy" id="212035"/>
    <lineage>
        <taxon>Viruses</taxon>
        <taxon>Varidnaviria</taxon>
        <taxon>Bamfordvirae</taxon>
        <taxon>Nucleocytoviricota</taxon>
        <taxon>Megaviricetes</taxon>
        <taxon>Imitervirales</taxon>
        <taxon>Mimiviridae</taxon>
        <taxon>Megamimivirinae</taxon>
        <taxon>Mimivirus</taxon>
        <taxon>Mimivirus bradfordmassiliense</taxon>
    </lineage>
</organism>
<sequence length="395" mass="44733">MEGIINIGTFIEQLTHYIKIGIFINKGVSSDKNHILDKCINLHNKLKSIEGSKEISPEEETYVRRSIKRFNLVLKVNPDQSPIDIKDKENQRKMITFQEHSSITDNDINSMITYSSNYNINIFSDVPLTFILRDGKYQQLLWQYTRSLFYISQVIISKVESKADMNNPVNVYKKNIVDSSMKKLEDILSTIAEIEDSIELEKILSLDQFLKSKLSNIKITNNQIDEAKAEFKEMFNKKGITGNDAISRMIDSITGKLDTINSGQGNILQNIVGIAQSVASEMRGEIENNPESIKSTLAAVTDIFKEATVNSNENENIPPELKNIFGAVMSSPLLSKIQGQESTENISDDVLGKELEILSQTYGLDKDEIMKAMKNETGEMDPTKFEQFMQKFQSN</sequence>
<accession>Q5UQD5</accession>
<protein>
    <recommendedName>
        <fullName>Uncharacterized protein R466</fullName>
    </recommendedName>
</protein>